<comment type="function">
    <text evidence="1">One of the primary rRNA binding proteins, it binds directly to 16S rRNA where it nucleates assembly of the head domain of the 30S subunit. Is located at the subunit interface close to the decoding center.</text>
</comment>
<comment type="subunit">
    <text evidence="1">Part of the 30S ribosomal subunit.</text>
</comment>
<comment type="similarity">
    <text evidence="1">Belongs to the universal ribosomal protein uS7 family.</text>
</comment>
<dbReference type="EMBL" id="CP000477">
    <property type="protein sequence ID" value="ABK13837.1"/>
    <property type="molecule type" value="Genomic_DNA"/>
</dbReference>
<dbReference type="RefSeq" id="WP_011695238.1">
    <property type="nucleotide sequence ID" value="NC_008553.1"/>
</dbReference>
<dbReference type="SMR" id="A0B563"/>
<dbReference type="STRING" id="349307.Mthe_0034"/>
<dbReference type="GeneID" id="4463412"/>
<dbReference type="KEGG" id="mtp:Mthe_0034"/>
<dbReference type="HOGENOM" id="CLU_063975_0_0_2"/>
<dbReference type="OrthoDB" id="45346at2157"/>
<dbReference type="Proteomes" id="UP000000674">
    <property type="component" value="Chromosome"/>
</dbReference>
<dbReference type="GO" id="GO:0015935">
    <property type="term" value="C:small ribosomal subunit"/>
    <property type="evidence" value="ECO:0007669"/>
    <property type="project" value="InterPro"/>
</dbReference>
<dbReference type="GO" id="GO:0019843">
    <property type="term" value="F:rRNA binding"/>
    <property type="evidence" value="ECO:0007669"/>
    <property type="project" value="UniProtKB-UniRule"/>
</dbReference>
<dbReference type="GO" id="GO:0003735">
    <property type="term" value="F:structural constituent of ribosome"/>
    <property type="evidence" value="ECO:0007669"/>
    <property type="project" value="InterPro"/>
</dbReference>
<dbReference type="GO" id="GO:0006412">
    <property type="term" value="P:translation"/>
    <property type="evidence" value="ECO:0007669"/>
    <property type="project" value="UniProtKB-UniRule"/>
</dbReference>
<dbReference type="CDD" id="cd14867">
    <property type="entry name" value="uS7_Eukaryote"/>
    <property type="match status" value="1"/>
</dbReference>
<dbReference type="Gene3D" id="1.10.455.10">
    <property type="entry name" value="Ribosomal protein S7 domain"/>
    <property type="match status" value="1"/>
</dbReference>
<dbReference type="HAMAP" id="MF_00480_A">
    <property type="entry name" value="Ribosomal_uS7_A"/>
    <property type="match status" value="1"/>
</dbReference>
<dbReference type="InterPro" id="IPR000235">
    <property type="entry name" value="Ribosomal_uS7"/>
</dbReference>
<dbReference type="InterPro" id="IPR026018">
    <property type="entry name" value="Ribosomal_uS7_arc"/>
</dbReference>
<dbReference type="InterPro" id="IPR023798">
    <property type="entry name" value="Ribosomal_uS7_dom"/>
</dbReference>
<dbReference type="InterPro" id="IPR036823">
    <property type="entry name" value="Ribosomal_uS7_dom_sf"/>
</dbReference>
<dbReference type="InterPro" id="IPR005716">
    <property type="entry name" value="Ribosomal_uS7_euk/arc"/>
</dbReference>
<dbReference type="NCBIfam" id="NF003106">
    <property type="entry name" value="PRK04027.1"/>
    <property type="match status" value="1"/>
</dbReference>
<dbReference type="NCBIfam" id="TIGR01028">
    <property type="entry name" value="uS7_euk_arch"/>
    <property type="match status" value="1"/>
</dbReference>
<dbReference type="PANTHER" id="PTHR11205">
    <property type="entry name" value="RIBOSOMAL PROTEIN S7"/>
    <property type="match status" value="1"/>
</dbReference>
<dbReference type="Pfam" id="PF00177">
    <property type="entry name" value="Ribosomal_S7"/>
    <property type="match status" value="1"/>
</dbReference>
<dbReference type="PIRSF" id="PIRSF002122">
    <property type="entry name" value="RPS7p_RPS7a_RPS5e_RPS7o"/>
    <property type="match status" value="1"/>
</dbReference>
<dbReference type="SUPFAM" id="SSF47973">
    <property type="entry name" value="Ribosomal protein S7"/>
    <property type="match status" value="1"/>
</dbReference>
<gene>
    <name evidence="1" type="primary">rps7</name>
    <name type="ordered locus">Mthe_0034</name>
</gene>
<feature type="chain" id="PRO_1000014231" description="Small ribosomal subunit protein uS7">
    <location>
        <begin position="1"/>
        <end position="185"/>
    </location>
</feature>
<proteinExistence type="inferred from homology"/>
<keyword id="KW-1185">Reference proteome</keyword>
<keyword id="KW-0687">Ribonucleoprotein</keyword>
<keyword id="KW-0689">Ribosomal protein</keyword>
<keyword id="KW-0694">RNA-binding</keyword>
<keyword id="KW-0699">rRNA-binding</keyword>
<protein>
    <recommendedName>
        <fullName evidence="1">Small ribosomal subunit protein uS7</fullName>
    </recommendedName>
    <alternativeName>
        <fullName evidence="2">30S ribosomal protein S7</fullName>
    </alternativeName>
</protein>
<name>RS7_METTP</name>
<sequence>MKVFGKWDASEVEIPDLSVKGYINLKPRIVLHTGGRHAKQQFKKSELHVVERLINKMMRKEKNTGQKQIAYRIVEEAFDIIHSRTKENPLSVLVRAISNAGPREEVVRLKYGGITVPKAVDTAPQRRVDTALMLIAKGAWQASFKSRRSIQNCLADEIIAAANYDVKSFAVSRKDSIERVAKAAR</sequence>
<organism>
    <name type="scientific">Methanothrix thermoacetophila (strain DSM 6194 / JCM 14653 / NBRC 101360 / PT)</name>
    <name type="common">Methanosaeta thermophila</name>
    <dbReference type="NCBI Taxonomy" id="349307"/>
    <lineage>
        <taxon>Archaea</taxon>
        <taxon>Methanobacteriati</taxon>
        <taxon>Methanobacteriota</taxon>
        <taxon>Stenosarchaea group</taxon>
        <taxon>Methanomicrobia</taxon>
        <taxon>Methanotrichales</taxon>
        <taxon>Methanotrichaceae</taxon>
        <taxon>Methanothrix</taxon>
    </lineage>
</organism>
<evidence type="ECO:0000255" key="1">
    <source>
        <dbReference type="HAMAP-Rule" id="MF_00480"/>
    </source>
</evidence>
<evidence type="ECO:0000305" key="2"/>
<accession>A0B563</accession>
<reference key="1">
    <citation type="submission" date="2006-10" db="EMBL/GenBank/DDBJ databases">
        <title>Complete sequence of Methanosaeta thermophila PT.</title>
        <authorList>
            <consortium name="US DOE Joint Genome Institute"/>
            <person name="Copeland A."/>
            <person name="Lucas S."/>
            <person name="Lapidus A."/>
            <person name="Barry K."/>
            <person name="Detter J.C."/>
            <person name="Glavina del Rio T."/>
            <person name="Hammon N."/>
            <person name="Israni S."/>
            <person name="Pitluck S."/>
            <person name="Chain P."/>
            <person name="Malfatti S."/>
            <person name="Shin M."/>
            <person name="Vergez L."/>
            <person name="Schmutz J."/>
            <person name="Larimer F."/>
            <person name="Land M."/>
            <person name="Hauser L."/>
            <person name="Kyrpides N."/>
            <person name="Kim E."/>
            <person name="Smith K.S."/>
            <person name="Ingram-Smith C."/>
            <person name="Richardson P."/>
        </authorList>
    </citation>
    <scope>NUCLEOTIDE SEQUENCE [LARGE SCALE GENOMIC DNA]</scope>
    <source>
        <strain>DSM 6194 / JCM 14653 / NBRC 101360 / PT</strain>
    </source>
</reference>